<organism>
    <name type="scientific">Prionace glauca</name>
    <name type="common">Blue shark</name>
    <name type="synonym">Squalus glaucus</name>
    <dbReference type="NCBI Taxonomy" id="7815"/>
    <lineage>
        <taxon>Eukaryota</taxon>
        <taxon>Metazoa</taxon>
        <taxon>Chordata</taxon>
        <taxon>Craniata</taxon>
        <taxon>Vertebrata</taxon>
        <taxon>Chondrichthyes</taxon>
        <taxon>Elasmobranchii</taxon>
        <taxon>Galeomorphii</taxon>
        <taxon>Galeoidea</taxon>
        <taxon>Carcharhiniformes</taxon>
        <taxon>Carcharhinidae</taxon>
        <taxon>Prionace</taxon>
    </lineage>
</organism>
<reference key="1">
    <citation type="journal article" date="1989" name="Gen. Comp. Endocrinol.">
        <title>The complete amino acid sequence of growth hormone of an elasmobranch, the blue shark (Prionace glauca).</title>
        <authorList>
            <person name="Yamaguchi K."/>
            <person name="Yasuda A."/>
            <person name="Lewis U.J."/>
            <person name="Yokoo Y."/>
            <person name="Kawauchi H."/>
        </authorList>
    </citation>
    <scope>PROTEIN SEQUENCE</scope>
</reference>
<feature type="chain" id="PRO_0000181337" description="Somatotropin">
    <location>
        <begin position="1"/>
        <end position="183"/>
    </location>
</feature>
<feature type="region of interest" description="Disordered" evidence="2">
    <location>
        <begin position="38"/>
        <end position="67"/>
    </location>
</feature>
<feature type="compositionally biased region" description="Polar residues" evidence="2">
    <location>
        <begin position="46"/>
        <end position="56"/>
    </location>
</feature>
<feature type="binding site" evidence="1">
    <location>
        <position position="19"/>
    </location>
    <ligand>
        <name>Zn(2+)</name>
        <dbReference type="ChEBI" id="CHEBI:29105"/>
    </ligand>
</feature>
<feature type="binding site" evidence="1">
    <location>
        <position position="165"/>
    </location>
    <ligand>
        <name>Zn(2+)</name>
        <dbReference type="ChEBI" id="CHEBI:29105"/>
    </ligand>
</feature>
<feature type="disulfide bond" evidence="1">
    <location>
        <begin position="52"/>
        <end position="156"/>
    </location>
</feature>
<feature type="disulfide bond" evidence="1">
    <location>
        <begin position="173"/>
        <end position="181"/>
    </location>
</feature>
<dbReference type="PIR" id="A60623">
    <property type="entry name" value="A60623"/>
</dbReference>
<dbReference type="SMR" id="P34006"/>
<dbReference type="GO" id="GO:0005615">
    <property type="term" value="C:extracellular space"/>
    <property type="evidence" value="ECO:0007669"/>
    <property type="project" value="InterPro"/>
</dbReference>
<dbReference type="GO" id="GO:0005131">
    <property type="term" value="F:growth hormone receptor binding"/>
    <property type="evidence" value="ECO:0007669"/>
    <property type="project" value="InterPro"/>
</dbReference>
<dbReference type="GO" id="GO:0005179">
    <property type="term" value="F:hormone activity"/>
    <property type="evidence" value="ECO:0007669"/>
    <property type="project" value="UniProtKB-KW"/>
</dbReference>
<dbReference type="GO" id="GO:0046872">
    <property type="term" value="F:metal ion binding"/>
    <property type="evidence" value="ECO:0007669"/>
    <property type="project" value="UniProtKB-KW"/>
</dbReference>
<dbReference type="GO" id="GO:0048513">
    <property type="term" value="P:animal organ development"/>
    <property type="evidence" value="ECO:0007669"/>
    <property type="project" value="TreeGrafter"/>
</dbReference>
<dbReference type="GO" id="GO:0060396">
    <property type="term" value="P:growth hormone receptor signaling pathway"/>
    <property type="evidence" value="ECO:0007669"/>
    <property type="project" value="TreeGrafter"/>
</dbReference>
<dbReference type="GO" id="GO:0045927">
    <property type="term" value="P:positive regulation of growth"/>
    <property type="evidence" value="ECO:0007669"/>
    <property type="project" value="TreeGrafter"/>
</dbReference>
<dbReference type="GO" id="GO:0046427">
    <property type="term" value="P:positive regulation of receptor signaling pathway via JAK-STAT"/>
    <property type="evidence" value="ECO:0007669"/>
    <property type="project" value="TreeGrafter"/>
</dbReference>
<dbReference type="GO" id="GO:0031667">
    <property type="term" value="P:response to nutrient levels"/>
    <property type="evidence" value="ECO:0007669"/>
    <property type="project" value="TreeGrafter"/>
</dbReference>
<dbReference type="CDD" id="cd10285">
    <property type="entry name" value="somatotropin_like"/>
    <property type="match status" value="1"/>
</dbReference>
<dbReference type="Gene3D" id="1.20.1250.10">
    <property type="match status" value="1"/>
</dbReference>
<dbReference type="InterPro" id="IPR009079">
    <property type="entry name" value="4_helix_cytokine-like_core"/>
</dbReference>
<dbReference type="InterPro" id="IPR034975">
    <property type="entry name" value="Somatotropin"/>
</dbReference>
<dbReference type="InterPro" id="IPR001400">
    <property type="entry name" value="Somatotropin/Prolactin"/>
</dbReference>
<dbReference type="InterPro" id="IPR018116">
    <property type="entry name" value="Somatotropin_CS"/>
</dbReference>
<dbReference type="PANTHER" id="PTHR11417:SF2">
    <property type="entry name" value="SOMATOTROPIN"/>
    <property type="match status" value="1"/>
</dbReference>
<dbReference type="PANTHER" id="PTHR11417">
    <property type="entry name" value="SOMATOTROPIN,PROLACTIN"/>
    <property type="match status" value="1"/>
</dbReference>
<dbReference type="Pfam" id="PF00103">
    <property type="entry name" value="Hormone_1"/>
    <property type="match status" value="1"/>
</dbReference>
<dbReference type="PRINTS" id="PR00836">
    <property type="entry name" value="SOMATOTROPIN"/>
</dbReference>
<dbReference type="SUPFAM" id="SSF47266">
    <property type="entry name" value="4-helical cytokines"/>
    <property type="match status" value="1"/>
</dbReference>
<dbReference type="PROSITE" id="PS00266">
    <property type="entry name" value="SOMATOTROPIN_1"/>
    <property type="match status" value="1"/>
</dbReference>
<dbReference type="PROSITE" id="PS00338">
    <property type="entry name" value="SOMATOTROPIN_2"/>
    <property type="match status" value="1"/>
</dbReference>
<comment type="function">
    <text>Growth hormone plays an important role in growth control and is involved in the regulation of several anabolic processes. Implicated as an osmoregulatory substance important for seawater adaptation.</text>
</comment>
<comment type="subcellular location">
    <subcellularLocation>
        <location>Secreted</location>
    </subcellularLocation>
</comment>
<comment type="similarity">
    <text evidence="3">Belongs to the somatotropin/prolactin family.</text>
</comment>
<gene>
    <name type="primary">gh</name>
</gene>
<keyword id="KW-0903">Direct protein sequencing</keyword>
<keyword id="KW-1015">Disulfide bond</keyword>
<keyword id="KW-0372">Hormone</keyword>
<keyword id="KW-0479">Metal-binding</keyword>
<keyword id="KW-0964">Secreted</keyword>
<keyword id="KW-0862">Zinc</keyword>
<name>SOMA_PRIGL</name>
<evidence type="ECO:0000250" key="1"/>
<evidence type="ECO:0000256" key="2">
    <source>
        <dbReference type="SAM" id="MobiDB-lite"/>
    </source>
</evidence>
<evidence type="ECO:0000305" key="3"/>
<accession>P34006</accession>
<protein>
    <recommendedName>
        <fullName>Somatotropin</fullName>
    </recommendedName>
    <alternativeName>
        <fullName>Growth hormone</fullName>
    </alternativeName>
</protein>
<proteinExistence type="evidence at protein level"/>
<sequence length="183" mass="21071">YPLLPLSDLFAKAVHRAQHLHLVAAETTKDFERKYIPEEQRHSHKSSPSAFCQSETIPAPTGKEDAQQRSDRELLLYSLLLIQSWLNPIQNLSAFRTSDRVYDKLRDLEEGIFALMKTLEDGGSSQGFAWLKFSYERFDGNLSEEALMKNYGLLACFKKDMHKVETYLKVMNCKRFAESNCTV</sequence>